<keyword id="KW-0249">Electron transport</keyword>
<keyword id="KW-0274">FAD</keyword>
<keyword id="KW-0285">Flavoprotein</keyword>
<keyword id="KW-0325">Glycoprotein</keyword>
<keyword id="KW-0406">Ion transport</keyword>
<keyword id="KW-0408">Iron</keyword>
<keyword id="KW-0410">Iron transport</keyword>
<keyword id="KW-0472">Membrane</keyword>
<keyword id="KW-0520">NAD</keyword>
<keyword id="KW-0560">Oxidoreductase</keyword>
<keyword id="KW-1185">Reference proteome</keyword>
<keyword id="KW-0812">Transmembrane</keyword>
<keyword id="KW-1133">Transmembrane helix</keyword>
<keyword id="KW-0813">Transport</keyword>
<reference key="1">
    <citation type="journal article" date="2004" name="Science">
        <title>The Ashbya gossypii genome as a tool for mapping the ancient Saccharomyces cerevisiae genome.</title>
        <authorList>
            <person name="Dietrich F.S."/>
            <person name="Voegeli S."/>
            <person name="Brachat S."/>
            <person name="Lerch A."/>
            <person name="Gates K."/>
            <person name="Steiner S."/>
            <person name="Mohr C."/>
            <person name="Poehlmann R."/>
            <person name="Luedi P."/>
            <person name="Choi S."/>
            <person name="Wing R.A."/>
            <person name="Flavier A."/>
            <person name="Gaffney T.D."/>
            <person name="Philippsen P."/>
        </authorList>
    </citation>
    <scope>NUCLEOTIDE SEQUENCE [LARGE SCALE GENOMIC DNA]</scope>
    <source>
        <strain>ATCC 10895 / CBS 109.51 / FGSC 9923 / NRRL Y-1056</strain>
    </source>
</reference>
<reference key="2">
    <citation type="journal article" date="2013" name="G3 (Bethesda)">
        <title>Genomes of Ashbya fungi isolated from insects reveal four mating-type loci, numerous translocations, lack of transposons, and distinct gene duplications.</title>
        <authorList>
            <person name="Dietrich F.S."/>
            <person name="Voegeli S."/>
            <person name="Kuo S."/>
            <person name="Philippsen P."/>
        </authorList>
    </citation>
    <scope>GENOME REANNOTATION</scope>
    <source>
        <strain>ATCC 10895 / CBS 109.51 / FGSC 9923 / NRRL Y-1056</strain>
    </source>
</reference>
<comment type="function">
    <text evidence="1">Is required for the uptake of Fe(3+) ions. May participate in the transport of electrons from cytoplasm to an extracellular substrate (Fe(3+) ion) via FAD and heme intermediates. Involved in iron homeostasis (By similarity).</text>
</comment>
<comment type="catalytic activity">
    <reaction>
        <text>2 a Fe(II)-siderophore + NAD(+) + H(+) = 2 a Fe(III)-siderophore + NADH</text>
        <dbReference type="Rhea" id="RHEA:15061"/>
        <dbReference type="Rhea" id="RHEA-COMP:11342"/>
        <dbReference type="Rhea" id="RHEA-COMP:11344"/>
        <dbReference type="ChEBI" id="CHEBI:15378"/>
        <dbReference type="ChEBI" id="CHEBI:29033"/>
        <dbReference type="ChEBI" id="CHEBI:29034"/>
        <dbReference type="ChEBI" id="CHEBI:57540"/>
        <dbReference type="ChEBI" id="CHEBI:57945"/>
        <dbReference type="EC" id="1.16.1.7"/>
    </reaction>
</comment>
<comment type="cofactor">
    <cofactor evidence="3">
        <name>FAD</name>
        <dbReference type="ChEBI" id="CHEBI:57692"/>
    </cofactor>
</comment>
<comment type="subcellular location">
    <subcellularLocation>
        <location>Membrane</location>
        <topology>Multi-pass membrane protein</topology>
    </subcellularLocation>
</comment>
<protein>
    <recommendedName>
        <fullName>Probable ferric reductase transmembrane component</fullName>
        <ecNumber>1.16.1.7</ecNumber>
    </recommendedName>
    <alternativeName>
        <fullName>Ferric-chelate reductase 8</fullName>
    </alternativeName>
</protein>
<feature type="chain" id="PRO_0000239646" description="Probable ferric reductase transmembrane component">
    <location>
        <begin position="1"/>
        <end position="686"/>
    </location>
</feature>
<feature type="transmembrane region" description="Helical" evidence="2">
    <location>
        <begin position="23"/>
        <end position="43"/>
    </location>
</feature>
<feature type="transmembrane region" description="Helical" evidence="2">
    <location>
        <begin position="79"/>
        <end position="99"/>
    </location>
</feature>
<feature type="transmembrane region" description="Helical" evidence="2">
    <location>
        <begin position="111"/>
        <end position="131"/>
    </location>
</feature>
<feature type="transmembrane region" description="Helical" evidence="2">
    <location>
        <begin position="147"/>
        <end position="167"/>
    </location>
</feature>
<feature type="transmembrane region" description="Helical" evidence="2">
    <location>
        <begin position="178"/>
        <end position="198"/>
    </location>
</feature>
<feature type="transmembrane region" description="Helical" evidence="2">
    <location>
        <begin position="205"/>
        <end position="225"/>
    </location>
</feature>
<feature type="transmembrane region" description="Helical" evidence="2">
    <location>
        <begin position="256"/>
        <end position="276"/>
    </location>
</feature>
<feature type="transmembrane region" description="Helical" evidence="2">
    <location>
        <begin position="392"/>
        <end position="412"/>
    </location>
</feature>
<feature type="domain" description="Ferric oxidoreductase">
    <location>
        <begin position="108"/>
        <end position="666"/>
    </location>
</feature>
<feature type="binding site" evidence="2">
    <location>
        <begin position="308"/>
        <end position="314"/>
    </location>
    <ligand>
        <name>FAD</name>
        <dbReference type="ChEBI" id="CHEBI:57692"/>
    </ligand>
</feature>
<feature type="binding site" evidence="2">
    <location>
        <begin position="431"/>
        <end position="439"/>
    </location>
    <ligand>
        <name>NAD(+)</name>
        <dbReference type="ChEBI" id="CHEBI:57540"/>
    </ligand>
</feature>
<feature type="glycosylation site" description="N-linked (GlcNAc...) asparagine" evidence="2">
    <location>
        <position position="506"/>
    </location>
</feature>
<feature type="glycosylation site" description="N-linked (GlcNAc...) asparagine" evidence="2">
    <location>
        <position position="644"/>
    </location>
</feature>
<evidence type="ECO:0000250" key="1"/>
<evidence type="ECO:0000255" key="2"/>
<evidence type="ECO:0000305" key="3"/>
<accession>Q75CQ8</accession>
<dbReference type="EC" id="1.16.1.7"/>
<dbReference type="EMBL" id="AE016816">
    <property type="protein sequence ID" value="AAS51089.1"/>
    <property type="molecule type" value="Genomic_DNA"/>
</dbReference>
<dbReference type="RefSeq" id="NP_983265.1">
    <property type="nucleotide sequence ID" value="NM_208618.1"/>
</dbReference>
<dbReference type="FunCoup" id="Q75CQ8">
    <property type="interactions" value="33"/>
</dbReference>
<dbReference type="STRING" id="284811.Q75CQ8"/>
<dbReference type="GlyCosmos" id="Q75CQ8">
    <property type="glycosylation" value="2 sites, No reported glycans"/>
</dbReference>
<dbReference type="EnsemblFungi" id="AAS51089">
    <property type="protein sequence ID" value="AAS51089"/>
    <property type="gene ID" value="AGOS_ACL139W"/>
</dbReference>
<dbReference type="GeneID" id="4619385"/>
<dbReference type="KEGG" id="ago:AGOS_ACL139W"/>
<dbReference type="eggNOG" id="KOG0039">
    <property type="taxonomic scope" value="Eukaryota"/>
</dbReference>
<dbReference type="HOGENOM" id="CLU_025685_0_0_1"/>
<dbReference type="InParanoid" id="Q75CQ8"/>
<dbReference type="OMA" id="LLPIHKW"/>
<dbReference type="OrthoDB" id="10006946at2759"/>
<dbReference type="Proteomes" id="UP000000591">
    <property type="component" value="Chromosome III"/>
</dbReference>
<dbReference type="GO" id="GO:0005886">
    <property type="term" value="C:plasma membrane"/>
    <property type="evidence" value="ECO:0000318"/>
    <property type="project" value="GO_Central"/>
</dbReference>
<dbReference type="GO" id="GO:0140618">
    <property type="term" value="F:ferric-chelate reductase (NADH) activity"/>
    <property type="evidence" value="ECO:0007669"/>
    <property type="project" value="UniProtKB-EC"/>
</dbReference>
<dbReference type="GO" id="GO:0000293">
    <property type="term" value="F:ferric-chelate reductase activity"/>
    <property type="evidence" value="ECO:0000318"/>
    <property type="project" value="GO_Central"/>
</dbReference>
<dbReference type="GO" id="GO:0033215">
    <property type="term" value="P:reductive iron assimilation"/>
    <property type="evidence" value="ECO:0000318"/>
    <property type="project" value="GO_Central"/>
</dbReference>
<dbReference type="CDD" id="cd06186">
    <property type="entry name" value="NOX_Duox_like_FAD_NADP"/>
    <property type="match status" value="1"/>
</dbReference>
<dbReference type="InterPro" id="IPR013130">
    <property type="entry name" value="Fe3_Rdtase_TM_dom"/>
</dbReference>
<dbReference type="InterPro" id="IPR039261">
    <property type="entry name" value="FNR_nucleotide-bd"/>
</dbReference>
<dbReference type="InterPro" id="IPR050369">
    <property type="entry name" value="RBOH/FRE"/>
</dbReference>
<dbReference type="PANTHER" id="PTHR11972:SF178">
    <property type="entry name" value="FERRIC REDUCTASE TRANSMEMBRANE COMPONENT 8-RELATED"/>
    <property type="match status" value="1"/>
</dbReference>
<dbReference type="PANTHER" id="PTHR11972">
    <property type="entry name" value="NADPH OXIDASE"/>
    <property type="match status" value="1"/>
</dbReference>
<dbReference type="Pfam" id="PF01794">
    <property type="entry name" value="Ferric_reduct"/>
    <property type="match status" value="1"/>
</dbReference>
<dbReference type="SFLD" id="SFLDF00463">
    <property type="entry name" value="AIM14"/>
    <property type="match status" value="1"/>
</dbReference>
<dbReference type="SFLD" id="SFLDS00052">
    <property type="entry name" value="Ferric_Reductase_Domain"/>
    <property type="match status" value="1"/>
</dbReference>
<dbReference type="SFLD" id="SFLDG01168">
    <property type="entry name" value="Ferric_reductase_subgroup_(FRE"/>
    <property type="match status" value="1"/>
</dbReference>
<dbReference type="SUPFAM" id="SSF52343">
    <property type="entry name" value="Ferredoxin reductase-like, C-terminal NADP-linked domain"/>
    <property type="match status" value="1"/>
</dbReference>
<gene>
    <name type="primary">FRE8</name>
    <name type="ordered locus">ACL139W</name>
</gene>
<organism>
    <name type="scientific">Eremothecium gossypii (strain ATCC 10895 / CBS 109.51 / FGSC 9923 / NRRL Y-1056)</name>
    <name type="common">Yeast</name>
    <name type="synonym">Ashbya gossypii</name>
    <dbReference type="NCBI Taxonomy" id="284811"/>
    <lineage>
        <taxon>Eukaryota</taxon>
        <taxon>Fungi</taxon>
        <taxon>Dikarya</taxon>
        <taxon>Ascomycota</taxon>
        <taxon>Saccharomycotina</taxon>
        <taxon>Saccharomycetes</taxon>
        <taxon>Saccharomycetales</taxon>
        <taxon>Saccharomycetaceae</taxon>
        <taxon>Eremothecium</taxon>
    </lineage>
</organism>
<proteinExistence type="inferred from homology"/>
<sequence length="686" mass="77515">MGGAWQEAVVRSIGAADERMVRLSGWASLALALGLVCVVVPVVNYMRLNPWVFRVMHHWRHHVMRRHGAMCRKLVQQRTLWLALLWCMLGGACAVVGSADVVVVTKRLGRVAAAFMPALFLLTLRPSPLPYTLYLSLLPMHKWLGRVVVLQATVHSALYTWYFATSGKMAKMKKTANWMGAVALLAFVLIAATSLPAVRRRRFRTFYYVHYVGTWVSVLAVHVHSRPPVTTYTVLNVALLLYQAWYRISRMSTTTVTVVPISTSLALLEFPLADLVEKPQLPSGHVRINLRAPSILGRVFQHIMPMQHPFTVASLPTDTTVRLIVRKSRFPLVNNGKYYVTGAFEPKVDFLSHRKRRMPGSWAPEPASPFQCQSPSLQSSPLHYNIKASRVLMVVGGSAISFGLPFLRILNFNGVNVRLIWVCRDYHDLRILSQFRSNFNGLEIYVTGTNCEEQDLNIDYVDYDERSSEGERDPERCALLSPKASEYNCLTPTTGGSTLSGRDAHNYSTFQNRCHSCKHLDRGCRDLEDHAIADINDEIDFTDFFSTRHSTSKYHPKENSKLPVITKDSVFRKPNYVVPPVFDRYDLKTGFTTYTTREKLSIPTGVKLFFGRPVLSPRDYHWCLQKECIGPSETNECCRADIANSTHVDDLARVWVLAAGPQALVEATRIWASDGGLHFHEESFKV</sequence>
<name>FRE8_EREGS</name>